<proteinExistence type="evidence at transcript level"/>
<evidence type="ECO:0000250" key="1"/>
<evidence type="ECO:0000255" key="2"/>
<evidence type="ECO:0000305" key="3"/>
<sequence length="75" mass="8416">MKLLLFTALVLVVISLIEVEAENERACIPLEKECTKTPGNCCSGLKCDCYRRFEQGVAKGIQCWCIEKDVTYKGI</sequence>
<protein>
    <recommendedName>
        <fullName>U6-lycotoxin-Ls1b</fullName>
    </recommendedName>
    <alternativeName>
        <fullName>Toxin-like structure LSTX-F10</fullName>
    </alternativeName>
</protein>
<accession>B6DCW0</accession>
<keyword id="KW-1015">Disulfide bond</keyword>
<keyword id="KW-0964">Secreted</keyword>
<keyword id="KW-0732">Signal</keyword>
<keyword id="KW-0800">Toxin</keyword>
<organism>
    <name type="scientific">Lycosa singoriensis</name>
    <name type="common">Wolf spider</name>
    <name type="synonym">Aranea singoriensis</name>
    <dbReference type="NCBI Taxonomy" id="434756"/>
    <lineage>
        <taxon>Eukaryota</taxon>
        <taxon>Metazoa</taxon>
        <taxon>Ecdysozoa</taxon>
        <taxon>Arthropoda</taxon>
        <taxon>Chelicerata</taxon>
        <taxon>Arachnida</taxon>
        <taxon>Araneae</taxon>
        <taxon>Araneomorphae</taxon>
        <taxon>Entelegynae</taxon>
        <taxon>Lycosoidea</taxon>
        <taxon>Lycosidae</taxon>
        <taxon>Lycosa</taxon>
    </lineage>
</organism>
<name>TX610_LYCSI</name>
<dbReference type="EMBL" id="EU926044">
    <property type="protein sequence ID" value="ACI41376.1"/>
    <property type="molecule type" value="mRNA"/>
</dbReference>
<dbReference type="EMBL" id="FM864048">
    <property type="protein sequence ID" value="CAS03645.1"/>
    <property type="molecule type" value="mRNA"/>
</dbReference>
<dbReference type="SMR" id="B6DCW0"/>
<dbReference type="ArachnoServer" id="AS000982">
    <property type="toxin name" value="U6-lycotoxin-Ls1b"/>
</dbReference>
<dbReference type="GO" id="GO:0005576">
    <property type="term" value="C:extracellular region"/>
    <property type="evidence" value="ECO:0007669"/>
    <property type="project" value="UniProtKB-SubCell"/>
</dbReference>
<dbReference type="GO" id="GO:0090729">
    <property type="term" value="F:toxin activity"/>
    <property type="evidence" value="ECO:0007669"/>
    <property type="project" value="UniProtKB-KW"/>
</dbReference>
<dbReference type="InterPro" id="IPR019553">
    <property type="entry name" value="Spider_toxin_CSTX_knottin"/>
</dbReference>
<dbReference type="Pfam" id="PF10530">
    <property type="entry name" value="Toxin_35"/>
    <property type="match status" value="1"/>
</dbReference>
<feature type="signal peptide" evidence="2">
    <location>
        <begin position="1"/>
        <end position="21"/>
    </location>
</feature>
<feature type="propeptide" id="PRO_0000401741" evidence="1">
    <location>
        <begin position="22"/>
        <end position="25"/>
    </location>
</feature>
<feature type="chain" id="PRO_0000401742" description="U6-lycotoxin-Ls1b">
    <location>
        <begin position="26"/>
        <end position="75"/>
    </location>
</feature>
<reference key="1">
    <citation type="journal article" date="2010" name="Zoology">
        <title>Transcriptome analysis of the venom glands of the Chinese wolf spider Lycosa singoriensis.</title>
        <authorList>
            <person name="Zhang Y."/>
            <person name="Chen J."/>
            <person name="Tang X."/>
            <person name="Wang F."/>
            <person name="Jiang L."/>
            <person name="Xiong X."/>
            <person name="Wang M."/>
            <person name="Rong M."/>
            <person name="Liu Z."/>
            <person name="Liang S."/>
        </authorList>
    </citation>
    <scope>NUCLEOTIDE SEQUENCE [LARGE SCALE MRNA]</scope>
    <source>
        <tissue>Venom gland</tissue>
    </source>
</reference>
<comment type="subcellular location">
    <subcellularLocation>
        <location evidence="1">Secreted</location>
    </subcellularLocation>
</comment>
<comment type="tissue specificity">
    <text>Expressed by the venom gland.</text>
</comment>
<comment type="PTM">
    <text evidence="1">Contains 4 disulfide bonds.</text>
</comment>
<comment type="similarity">
    <text evidence="3">Belongs to the neurotoxin 19 (CSTX) family. 06 (U6-Lctx) subfamily.</text>
</comment>